<feature type="chain" id="PRO_0000257577" description="Putative pre-16S rRNA nuclease">
    <location>
        <begin position="1"/>
        <end position="156"/>
    </location>
</feature>
<name>YQGF_ALBFT</name>
<evidence type="ECO:0000255" key="1">
    <source>
        <dbReference type="HAMAP-Rule" id="MF_00651"/>
    </source>
</evidence>
<reference key="1">
    <citation type="submission" date="2006-02" db="EMBL/GenBank/DDBJ databases">
        <title>Complete sequence of chromosome of Rhodoferax ferrireducens DSM 15236.</title>
        <authorList>
            <person name="Copeland A."/>
            <person name="Lucas S."/>
            <person name="Lapidus A."/>
            <person name="Barry K."/>
            <person name="Detter J.C."/>
            <person name="Glavina del Rio T."/>
            <person name="Hammon N."/>
            <person name="Israni S."/>
            <person name="Pitluck S."/>
            <person name="Brettin T."/>
            <person name="Bruce D."/>
            <person name="Han C."/>
            <person name="Tapia R."/>
            <person name="Gilna P."/>
            <person name="Kiss H."/>
            <person name="Schmutz J."/>
            <person name="Larimer F."/>
            <person name="Land M."/>
            <person name="Kyrpides N."/>
            <person name="Ivanova N."/>
            <person name="Richardson P."/>
        </authorList>
    </citation>
    <scope>NUCLEOTIDE SEQUENCE [LARGE SCALE GENOMIC DNA]</scope>
    <source>
        <strain>ATCC BAA-621 / DSM 15236 / T118</strain>
    </source>
</reference>
<gene>
    <name type="ordered locus">Rfer_1378</name>
</gene>
<accession>Q21YP1</accession>
<dbReference type="EC" id="3.1.-.-" evidence="1"/>
<dbReference type="EMBL" id="CP000267">
    <property type="protein sequence ID" value="ABD69112.1"/>
    <property type="molecule type" value="Genomic_DNA"/>
</dbReference>
<dbReference type="SMR" id="Q21YP1"/>
<dbReference type="STRING" id="338969.Rfer_1378"/>
<dbReference type="KEGG" id="rfr:Rfer_1378"/>
<dbReference type="eggNOG" id="COG0816">
    <property type="taxonomic scope" value="Bacteria"/>
</dbReference>
<dbReference type="HOGENOM" id="CLU_098240_3_2_4"/>
<dbReference type="Proteomes" id="UP000008332">
    <property type="component" value="Chromosome"/>
</dbReference>
<dbReference type="GO" id="GO:0005829">
    <property type="term" value="C:cytosol"/>
    <property type="evidence" value="ECO:0007669"/>
    <property type="project" value="TreeGrafter"/>
</dbReference>
<dbReference type="GO" id="GO:0004518">
    <property type="term" value="F:nuclease activity"/>
    <property type="evidence" value="ECO:0007669"/>
    <property type="project" value="UniProtKB-KW"/>
</dbReference>
<dbReference type="GO" id="GO:0000967">
    <property type="term" value="P:rRNA 5'-end processing"/>
    <property type="evidence" value="ECO:0007669"/>
    <property type="project" value="UniProtKB-UniRule"/>
</dbReference>
<dbReference type="CDD" id="cd16964">
    <property type="entry name" value="YqgF"/>
    <property type="match status" value="1"/>
</dbReference>
<dbReference type="Gene3D" id="3.30.420.140">
    <property type="entry name" value="YqgF/RNase H-like domain"/>
    <property type="match status" value="1"/>
</dbReference>
<dbReference type="HAMAP" id="MF_00651">
    <property type="entry name" value="Nuclease_YqgF"/>
    <property type="match status" value="1"/>
</dbReference>
<dbReference type="InterPro" id="IPR012337">
    <property type="entry name" value="RNaseH-like_sf"/>
</dbReference>
<dbReference type="InterPro" id="IPR005227">
    <property type="entry name" value="YqgF"/>
</dbReference>
<dbReference type="InterPro" id="IPR006641">
    <property type="entry name" value="YqgF/RNaseH-like_dom"/>
</dbReference>
<dbReference type="InterPro" id="IPR037027">
    <property type="entry name" value="YqgF/RNaseH-like_dom_sf"/>
</dbReference>
<dbReference type="NCBIfam" id="TIGR00250">
    <property type="entry name" value="RNAse_H_YqgF"/>
    <property type="match status" value="1"/>
</dbReference>
<dbReference type="PANTHER" id="PTHR33317">
    <property type="entry name" value="POLYNUCLEOTIDYL TRANSFERASE, RIBONUCLEASE H-LIKE SUPERFAMILY PROTEIN"/>
    <property type="match status" value="1"/>
</dbReference>
<dbReference type="PANTHER" id="PTHR33317:SF4">
    <property type="entry name" value="POLYNUCLEOTIDYL TRANSFERASE, RIBONUCLEASE H-LIKE SUPERFAMILY PROTEIN"/>
    <property type="match status" value="1"/>
</dbReference>
<dbReference type="Pfam" id="PF03652">
    <property type="entry name" value="RuvX"/>
    <property type="match status" value="1"/>
</dbReference>
<dbReference type="SMART" id="SM00732">
    <property type="entry name" value="YqgFc"/>
    <property type="match status" value="1"/>
</dbReference>
<dbReference type="SUPFAM" id="SSF53098">
    <property type="entry name" value="Ribonuclease H-like"/>
    <property type="match status" value="1"/>
</dbReference>
<proteinExistence type="inferred from homology"/>
<protein>
    <recommendedName>
        <fullName evidence="1">Putative pre-16S rRNA nuclease</fullName>
        <ecNumber evidence="1">3.1.-.-</ecNumber>
    </recommendedName>
</protein>
<sequence length="156" mass="17106">MPLPLQPMPEPLIKPLADAAPGENPVHVAANLQTFLALDFGLKRTGFAVGNRLLRTAQPQGTIAAEGDARFVKIALQLKEWQPDALVVGVPFHPDGAAHENTLRARRFARQLQGRFKLPVFEVDERYTTTEALGRGARDADAMAACIILEQFLRSI</sequence>
<organism>
    <name type="scientific">Albidiferax ferrireducens (strain ATCC BAA-621 / DSM 15236 / T118)</name>
    <name type="common">Rhodoferax ferrireducens</name>
    <dbReference type="NCBI Taxonomy" id="338969"/>
    <lineage>
        <taxon>Bacteria</taxon>
        <taxon>Pseudomonadati</taxon>
        <taxon>Pseudomonadota</taxon>
        <taxon>Betaproteobacteria</taxon>
        <taxon>Burkholderiales</taxon>
        <taxon>Comamonadaceae</taxon>
        <taxon>Rhodoferax</taxon>
    </lineage>
</organism>
<comment type="function">
    <text evidence="1">Could be a nuclease involved in processing of the 5'-end of pre-16S rRNA.</text>
</comment>
<comment type="subcellular location">
    <subcellularLocation>
        <location evidence="1">Cytoplasm</location>
    </subcellularLocation>
</comment>
<comment type="similarity">
    <text evidence="1">Belongs to the YqgF nuclease family.</text>
</comment>
<keyword id="KW-0963">Cytoplasm</keyword>
<keyword id="KW-0378">Hydrolase</keyword>
<keyword id="KW-0540">Nuclease</keyword>
<keyword id="KW-1185">Reference proteome</keyword>
<keyword id="KW-0690">Ribosome biogenesis</keyword>